<proteinExistence type="evidence at transcript level"/>
<keyword id="KW-0379">Hydroxylation</keyword>
<keyword id="KW-1185">Reference proteome</keyword>
<keyword id="KW-0687">Ribonucleoprotein</keyword>
<keyword id="KW-0689">Ribosomal protein</keyword>
<protein>
    <recommendedName>
        <fullName evidence="2">Small ribosomal subunit protein uS12z</fullName>
    </recommendedName>
    <alternativeName>
        <fullName>40S ribosomal protein S23-1</fullName>
    </alternativeName>
    <alternativeName>
        <fullName>S12</fullName>
    </alternativeName>
</protein>
<comment type="similarity">
    <text evidence="3">Belongs to the universal ribosomal protein uS12 family.</text>
</comment>
<comment type="sequence caution" evidence="3">
    <conflict type="erroneous gene model prediction">
        <sequence resource="EMBL-CDS" id="AAF23298"/>
    </conflict>
</comment>
<name>RS231_ARATH</name>
<evidence type="ECO:0000250" key="1"/>
<evidence type="ECO:0000303" key="2">
    <source>
    </source>
</evidence>
<evidence type="ECO:0000305" key="3"/>
<sequence>MGKTRGMGAGRKLKQLRITQRWADKHYKKSNRGNEWKKPFACSSHAKGIVLEKIGIEAKQPNSAIRKCARVQLIKNGKKIAAFVPNDGCLNYIEENDEVLIAGFGRKGHAVGDIPGVRFKVVKVSGVSLLALFKEKKEKPRS</sequence>
<reference key="1">
    <citation type="journal article" date="2000" name="Nature">
        <title>Sequence and analysis of chromosome 3 of the plant Arabidopsis thaliana.</title>
        <authorList>
            <person name="Salanoubat M."/>
            <person name="Lemcke K."/>
            <person name="Rieger M."/>
            <person name="Ansorge W."/>
            <person name="Unseld M."/>
            <person name="Fartmann B."/>
            <person name="Valle G."/>
            <person name="Bloecker H."/>
            <person name="Perez-Alonso M."/>
            <person name="Obermaier B."/>
            <person name="Delseny M."/>
            <person name="Boutry M."/>
            <person name="Grivell L.A."/>
            <person name="Mache R."/>
            <person name="Puigdomenech P."/>
            <person name="De Simone V."/>
            <person name="Choisne N."/>
            <person name="Artiguenave F."/>
            <person name="Robert C."/>
            <person name="Brottier P."/>
            <person name="Wincker P."/>
            <person name="Cattolico L."/>
            <person name="Weissenbach J."/>
            <person name="Saurin W."/>
            <person name="Quetier F."/>
            <person name="Schaefer M."/>
            <person name="Mueller-Auer S."/>
            <person name="Gabel C."/>
            <person name="Fuchs M."/>
            <person name="Benes V."/>
            <person name="Wurmbach E."/>
            <person name="Drzonek H."/>
            <person name="Erfle H."/>
            <person name="Jordan N."/>
            <person name="Bangert S."/>
            <person name="Wiedelmann R."/>
            <person name="Kranz H."/>
            <person name="Voss H."/>
            <person name="Holland R."/>
            <person name="Brandt P."/>
            <person name="Nyakatura G."/>
            <person name="Vezzi A."/>
            <person name="D'Angelo M."/>
            <person name="Pallavicini A."/>
            <person name="Toppo S."/>
            <person name="Simionati B."/>
            <person name="Conrad A."/>
            <person name="Hornischer K."/>
            <person name="Kauer G."/>
            <person name="Loehnert T.-H."/>
            <person name="Nordsiek G."/>
            <person name="Reichelt J."/>
            <person name="Scharfe M."/>
            <person name="Schoen O."/>
            <person name="Bargues M."/>
            <person name="Terol J."/>
            <person name="Climent J."/>
            <person name="Navarro P."/>
            <person name="Collado C."/>
            <person name="Perez-Perez A."/>
            <person name="Ottenwaelder B."/>
            <person name="Duchemin D."/>
            <person name="Cooke R."/>
            <person name="Laudie M."/>
            <person name="Berger-Llauro C."/>
            <person name="Purnelle B."/>
            <person name="Masuy D."/>
            <person name="de Haan M."/>
            <person name="Maarse A.C."/>
            <person name="Alcaraz J.-P."/>
            <person name="Cottet A."/>
            <person name="Casacuberta E."/>
            <person name="Monfort A."/>
            <person name="Argiriou A."/>
            <person name="Flores M."/>
            <person name="Liguori R."/>
            <person name="Vitale D."/>
            <person name="Mannhaupt G."/>
            <person name="Haase D."/>
            <person name="Schoof H."/>
            <person name="Rudd S."/>
            <person name="Zaccaria P."/>
            <person name="Mewes H.-W."/>
            <person name="Mayer K.F.X."/>
            <person name="Kaul S."/>
            <person name="Town C.D."/>
            <person name="Koo H.L."/>
            <person name="Tallon L.J."/>
            <person name="Jenkins J."/>
            <person name="Rooney T."/>
            <person name="Rizzo M."/>
            <person name="Walts A."/>
            <person name="Utterback T."/>
            <person name="Fujii C.Y."/>
            <person name="Shea T.P."/>
            <person name="Creasy T.H."/>
            <person name="Haas B."/>
            <person name="Maiti R."/>
            <person name="Wu D."/>
            <person name="Peterson J."/>
            <person name="Van Aken S."/>
            <person name="Pai G."/>
            <person name="Militscher J."/>
            <person name="Sellers P."/>
            <person name="Gill J.E."/>
            <person name="Feldblyum T.V."/>
            <person name="Preuss D."/>
            <person name="Lin X."/>
            <person name="Nierman W.C."/>
            <person name="Salzberg S.L."/>
            <person name="White O."/>
            <person name="Venter J.C."/>
            <person name="Fraser C.M."/>
            <person name="Kaneko T."/>
            <person name="Nakamura Y."/>
            <person name="Sato S."/>
            <person name="Kato T."/>
            <person name="Asamizu E."/>
            <person name="Sasamoto S."/>
            <person name="Kimura T."/>
            <person name="Idesawa K."/>
            <person name="Kawashima K."/>
            <person name="Kishida Y."/>
            <person name="Kiyokawa C."/>
            <person name="Kohara M."/>
            <person name="Matsumoto M."/>
            <person name="Matsuno A."/>
            <person name="Muraki A."/>
            <person name="Nakayama S."/>
            <person name="Nakazaki N."/>
            <person name="Shinpo S."/>
            <person name="Takeuchi C."/>
            <person name="Wada T."/>
            <person name="Watanabe A."/>
            <person name="Yamada M."/>
            <person name="Yasuda M."/>
            <person name="Tabata S."/>
        </authorList>
    </citation>
    <scope>NUCLEOTIDE SEQUENCE [LARGE SCALE GENOMIC DNA]</scope>
    <source>
        <strain>cv. Columbia</strain>
    </source>
</reference>
<reference key="2">
    <citation type="journal article" date="2017" name="Plant J.">
        <title>Araport11: a complete reannotation of the Arabidopsis thaliana reference genome.</title>
        <authorList>
            <person name="Cheng C.Y."/>
            <person name="Krishnakumar V."/>
            <person name="Chan A.P."/>
            <person name="Thibaud-Nissen F."/>
            <person name="Schobel S."/>
            <person name="Town C.D."/>
        </authorList>
    </citation>
    <scope>GENOME REANNOTATION</scope>
    <source>
        <strain>cv. Columbia</strain>
    </source>
</reference>
<reference key="3">
    <citation type="submission" date="2002-03" db="EMBL/GenBank/DDBJ databases">
        <title>Full-length cDNA from Arabidopsis thaliana.</title>
        <authorList>
            <person name="Brover V.V."/>
            <person name="Troukhan M.E."/>
            <person name="Alexandrov N.A."/>
            <person name="Lu Y.-P."/>
            <person name="Flavell R.B."/>
            <person name="Feldmann K.A."/>
        </authorList>
    </citation>
    <scope>NUCLEOTIDE SEQUENCE [LARGE SCALE MRNA]</scope>
</reference>
<reference key="4">
    <citation type="journal article" date="2001" name="Plant Physiol.">
        <title>The organization of cytoplasmic ribosomal protein genes in the Arabidopsis genome.</title>
        <authorList>
            <person name="Barakat A."/>
            <person name="Szick-Miranda K."/>
            <person name="Chang I.-F."/>
            <person name="Guyot R."/>
            <person name="Blanc G."/>
            <person name="Cooke R."/>
            <person name="Delseny M."/>
            <person name="Bailey-Serres J."/>
        </authorList>
    </citation>
    <scope>GENE FAMILY ORGANIZATION</scope>
    <scope>NOMENCLATURE</scope>
</reference>
<reference key="5">
    <citation type="journal article" date="2023" name="Plant Cell">
        <title>An updated nomenclature for plant ribosomal protein genes.</title>
        <authorList>
            <person name="Scarpin M.R."/>
            <person name="Busche M."/>
            <person name="Martinez R.E."/>
            <person name="Harper L.C."/>
            <person name="Reiser L."/>
            <person name="Szakonyi D."/>
            <person name="Merchante C."/>
            <person name="Lan T."/>
            <person name="Xiong W."/>
            <person name="Mo B."/>
            <person name="Tang G."/>
            <person name="Chen X."/>
            <person name="Bailey-Serres J."/>
            <person name="Browning K.S."/>
            <person name="Brunkard J.O."/>
        </authorList>
    </citation>
    <scope>NOMENCLATURE</scope>
</reference>
<feature type="chain" id="PRO_0000146471" description="Small ribosomal subunit protein uS12z">
    <location>
        <begin position="1"/>
        <end position="142"/>
    </location>
</feature>
<feature type="modified residue" description="Hydroxyproline" evidence="1">
    <location>
        <position position="61"/>
    </location>
</feature>
<gene>
    <name type="primary">RPS23A</name>
    <name type="ordered locus">At3g09680</name>
    <name type="ORF">F11F8_27</name>
</gene>
<organism>
    <name type="scientific">Arabidopsis thaliana</name>
    <name type="common">Mouse-ear cress</name>
    <dbReference type="NCBI Taxonomy" id="3702"/>
    <lineage>
        <taxon>Eukaryota</taxon>
        <taxon>Viridiplantae</taxon>
        <taxon>Streptophyta</taxon>
        <taxon>Embryophyta</taxon>
        <taxon>Tracheophyta</taxon>
        <taxon>Spermatophyta</taxon>
        <taxon>Magnoliopsida</taxon>
        <taxon>eudicotyledons</taxon>
        <taxon>Gunneridae</taxon>
        <taxon>Pentapetalae</taxon>
        <taxon>rosids</taxon>
        <taxon>malvids</taxon>
        <taxon>Brassicales</taxon>
        <taxon>Brassicaceae</taxon>
        <taxon>Camelineae</taxon>
        <taxon>Arabidopsis</taxon>
    </lineage>
</organism>
<dbReference type="EMBL" id="AC016661">
    <property type="protein sequence ID" value="AAF23298.1"/>
    <property type="status" value="ALT_SEQ"/>
    <property type="molecule type" value="Genomic_DNA"/>
</dbReference>
<dbReference type="EMBL" id="CP002686">
    <property type="protein sequence ID" value="AEE74797.1"/>
    <property type="molecule type" value="Genomic_DNA"/>
</dbReference>
<dbReference type="EMBL" id="AY084484">
    <property type="protein sequence ID" value="AAM61055.1"/>
    <property type="molecule type" value="mRNA"/>
</dbReference>
<dbReference type="RefSeq" id="NP_566351.1">
    <property type="nucleotide sequence ID" value="NM_111802.1"/>
</dbReference>
<dbReference type="SMR" id="Q9SF35"/>
<dbReference type="BioGRID" id="5459">
    <property type="interactions" value="117"/>
</dbReference>
<dbReference type="FunCoup" id="Q9SF35">
    <property type="interactions" value="2770"/>
</dbReference>
<dbReference type="STRING" id="3702.Q9SF35"/>
<dbReference type="PaxDb" id="3702-AT3G09680.1"/>
<dbReference type="ProteomicsDB" id="226547"/>
<dbReference type="EnsemblPlants" id="AT3G09680.1">
    <property type="protein sequence ID" value="AT3G09680.1"/>
    <property type="gene ID" value="AT3G09680"/>
</dbReference>
<dbReference type="GeneID" id="820125"/>
<dbReference type="Gramene" id="AT3G09680.1">
    <property type="protein sequence ID" value="AT3G09680.1"/>
    <property type="gene ID" value="AT3G09680"/>
</dbReference>
<dbReference type="KEGG" id="ath:AT3G09680"/>
<dbReference type="Araport" id="AT3G09680"/>
<dbReference type="TAIR" id="AT3G09680"/>
<dbReference type="eggNOG" id="KOG1749">
    <property type="taxonomic scope" value="Eukaryota"/>
</dbReference>
<dbReference type="HOGENOM" id="CLU_115574_0_1_1"/>
<dbReference type="InParanoid" id="Q9SF35"/>
<dbReference type="OMA" id="WKKPFAC"/>
<dbReference type="OrthoDB" id="1029762at2759"/>
<dbReference type="PhylomeDB" id="Q9SF35"/>
<dbReference type="CD-CODE" id="4299E36E">
    <property type="entry name" value="Nucleolus"/>
</dbReference>
<dbReference type="PRO" id="PR:Q9SF35"/>
<dbReference type="Proteomes" id="UP000006548">
    <property type="component" value="Chromosome 3"/>
</dbReference>
<dbReference type="ExpressionAtlas" id="Q9SF35">
    <property type="expression patterns" value="baseline and differential"/>
</dbReference>
<dbReference type="GO" id="GO:0005829">
    <property type="term" value="C:cytosol"/>
    <property type="evidence" value="ECO:0007005"/>
    <property type="project" value="TAIR"/>
</dbReference>
<dbReference type="GO" id="GO:0022626">
    <property type="term" value="C:cytosolic ribosome"/>
    <property type="evidence" value="ECO:0007005"/>
    <property type="project" value="TAIR"/>
</dbReference>
<dbReference type="GO" id="GO:0022627">
    <property type="term" value="C:cytosolic small ribosomal subunit"/>
    <property type="evidence" value="ECO:0007005"/>
    <property type="project" value="TAIR"/>
</dbReference>
<dbReference type="GO" id="GO:0005730">
    <property type="term" value="C:nucleolus"/>
    <property type="evidence" value="ECO:0007005"/>
    <property type="project" value="TAIR"/>
</dbReference>
<dbReference type="GO" id="GO:0003729">
    <property type="term" value="F:mRNA binding"/>
    <property type="evidence" value="ECO:0000314"/>
    <property type="project" value="TAIR"/>
</dbReference>
<dbReference type="GO" id="GO:0003735">
    <property type="term" value="F:structural constituent of ribosome"/>
    <property type="evidence" value="ECO:0000314"/>
    <property type="project" value="CAFA"/>
</dbReference>
<dbReference type="GO" id="GO:0006412">
    <property type="term" value="P:translation"/>
    <property type="evidence" value="ECO:0007669"/>
    <property type="project" value="InterPro"/>
</dbReference>
<dbReference type="CDD" id="cd03367">
    <property type="entry name" value="Ribosomal_S23"/>
    <property type="match status" value="1"/>
</dbReference>
<dbReference type="FunFam" id="2.40.50.140:FF:000007">
    <property type="entry name" value="40S ribosomal protein S23"/>
    <property type="match status" value="1"/>
</dbReference>
<dbReference type="Gene3D" id="2.40.50.140">
    <property type="entry name" value="Nucleic acid-binding proteins"/>
    <property type="match status" value="1"/>
</dbReference>
<dbReference type="InterPro" id="IPR012340">
    <property type="entry name" value="NA-bd_OB-fold"/>
</dbReference>
<dbReference type="InterPro" id="IPR006032">
    <property type="entry name" value="Ribosomal_uS12"/>
</dbReference>
<dbReference type="InterPro" id="IPR005680">
    <property type="entry name" value="Ribosomal_uS12_euk/arc"/>
</dbReference>
<dbReference type="NCBIfam" id="TIGR00982">
    <property type="entry name" value="uS12_E_A"/>
    <property type="match status" value="1"/>
</dbReference>
<dbReference type="PANTHER" id="PTHR11652">
    <property type="entry name" value="30S RIBOSOMAL PROTEIN S12 FAMILY MEMBER"/>
    <property type="match status" value="1"/>
</dbReference>
<dbReference type="Pfam" id="PF00164">
    <property type="entry name" value="Ribosom_S12_S23"/>
    <property type="match status" value="1"/>
</dbReference>
<dbReference type="PIRSF" id="PIRSF002133">
    <property type="entry name" value="Ribosomal_S12/S23"/>
    <property type="match status" value="1"/>
</dbReference>
<dbReference type="SUPFAM" id="SSF50249">
    <property type="entry name" value="Nucleic acid-binding proteins"/>
    <property type="match status" value="1"/>
</dbReference>
<dbReference type="PROSITE" id="PS00055">
    <property type="entry name" value="RIBOSOMAL_S12"/>
    <property type="match status" value="1"/>
</dbReference>
<accession>Q9SF35</accession>
<accession>Q8LG36</accession>